<comment type="function">
    <text evidence="1">Component of the sulfite reductase complex that catalyzes the 6-electron reduction of sulfite to sulfide. This is one of several activities required for the biosynthesis of L-cysteine from sulfate. The flavoprotein component catalyzes the electron flow from NADPH -&gt; FAD -&gt; FMN to the hemoprotein component.</text>
</comment>
<comment type="catalytic activity">
    <reaction evidence="1">
        <text>hydrogen sulfide + 3 NADP(+) + 3 H2O = sulfite + 3 NADPH + 4 H(+)</text>
        <dbReference type="Rhea" id="RHEA:13801"/>
        <dbReference type="ChEBI" id="CHEBI:15377"/>
        <dbReference type="ChEBI" id="CHEBI:15378"/>
        <dbReference type="ChEBI" id="CHEBI:17359"/>
        <dbReference type="ChEBI" id="CHEBI:29919"/>
        <dbReference type="ChEBI" id="CHEBI:57783"/>
        <dbReference type="ChEBI" id="CHEBI:58349"/>
        <dbReference type="EC" id="1.8.1.2"/>
    </reaction>
</comment>
<comment type="cofactor">
    <cofactor evidence="1">
        <name>FAD</name>
        <dbReference type="ChEBI" id="CHEBI:57692"/>
    </cofactor>
    <text evidence="1">Binds 1 FAD per subunit.</text>
</comment>
<comment type="cofactor">
    <cofactor evidence="1">
        <name>FMN</name>
        <dbReference type="ChEBI" id="CHEBI:58210"/>
    </cofactor>
    <text evidence="1">Binds 1 FMN per subunit.</text>
</comment>
<comment type="pathway">
    <text evidence="1">Sulfur metabolism; hydrogen sulfide biosynthesis; hydrogen sulfide from sulfite (NADPH route): step 1/1.</text>
</comment>
<comment type="subunit">
    <text evidence="1">Alpha(8)-beta(8). The alpha component is a flavoprotein, the beta component is a hemoprotein.</text>
</comment>
<comment type="similarity">
    <text evidence="1">Belongs to the NADPH-dependent sulphite reductase flavoprotein subunit CysJ family.</text>
</comment>
<comment type="similarity">
    <text evidence="1">In the N-terminal section; belongs to the flavodoxin family.</text>
</comment>
<comment type="similarity">
    <text evidence="1">In the C-terminal section; belongs to the flavoprotein pyridine nucleotide cytochrome reductase family.</text>
</comment>
<keyword id="KW-0028">Amino-acid biosynthesis</keyword>
<keyword id="KW-0198">Cysteine biosynthesis</keyword>
<keyword id="KW-0249">Electron transport</keyword>
<keyword id="KW-0274">FAD</keyword>
<keyword id="KW-0285">Flavoprotein</keyword>
<keyword id="KW-0288">FMN</keyword>
<keyword id="KW-0521">NADP</keyword>
<keyword id="KW-0560">Oxidoreductase</keyword>
<keyword id="KW-1185">Reference proteome</keyword>
<keyword id="KW-0813">Transport</keyword>
<dbReference type="EC" id="1.8.1.2" evidence="1"/>
<dbReference type="EMBL" id="CR378673">
    <property type="protein sequence ID" value="CAG21619.1"/>
    <property type="molecule type" value="Genomic_DNA"/>
</dbReference>
<dbReference type="RefSeq" id="WP_011219868.1">
    <property type="nucleotide sequence ID" value="NC_006370.1"/>
</dbReference>
<dbReference type="SMR" id="Q6LM58"/>
<dbReference type="STRING" id="298386.PBPRA3321"/>
<dbReference type="KEGG" id="ppr:PBPRA3321"/>
<dbReference type="eggNOG" id="COG0369">
    <property type="taxonomic scope" value="Bacteria"/>
</dbReference>
<dbReference type="HOGENOM" id="CLU_001570_17_7_6"/>
<dbReference type="UniPathway" id="UPA00140">
    <property type="reaction ID" value="UER00207"/>
</dbReference>
<dbReference type="Proteomes" id="UP000000593">
    <property type="component" value="Chromosome 1"/>
</dbReference>
<dbReference type="GO" id="GO:0005829">
    <property type="term" value="C:cytosol"/>
    <property type="evidence" value="ECO:0007669"/>
    <property type="project" value="TreeGrafter"/>
</dbReference>
<dbReference type="GO" id="GO:0050660">
    <property type="term" value="F:flavin adenine dinucleotide binding"/>
    <property type="evidence" value="ECO:0007669"/>
    <property type="project" value="InterPro"/>
</dbReference>
<dbReference type="GO" id="GO:0010181">
    <property type="term" value="F:FMN binding"/>
    <property type="evidence" value="ECO:0007669"/>
    <property type="project" value="InterPro"/>
</dbReference>
<dbReference type="GO" id="GO:0004783">
    <property type="term" value="F:sulfite reductase (NADPH) activity"/>
    <property type="evidence" value="ECO:0007669"/>
    <property type="project" value="UniProtKB-UniRule"/>
</dbReference>
<dbReference type="GO" id="GO:0019344">
    <property type="term" value="P:cysteine biosynthetic process"/>
    <property type="evidence" value="ECO:0007669"/>
    <property type="project" value="UniProtKB-KW"/>
</dbReference>
<dbReference type="GO" id="GO:0070814">
    <property type="term" value="P:hydrogen sulfide biosynthetic process"/>
    <property type="evidence" value="ECO:0007669"/>
    <property type="project" value="UniProtKB-UniRule"/>
</dbReference>
<dbReference type="GO" id="GO:0000103">
    <property type="term" value="P:sulfate assimilation"/>
    <property type="evidence" value="ECO:0007669"/>
    <property type="project" value="UniProtKB-UniRule"/>
</dbReference>
<dbReference type="CDD" id="cd06199">
    <property type="entry name" value="SiR"/>
    <property type="match status" value="1"/>
</dbReference>
<dbReference type="FunFam" id="3.40.50.80:FF:000001">
    <property type="entry name" value="NADPH--cytochrome P450 reductase 1"/>
    <property type="match status" value="1"/>
</dbReference>
<dbReference type="Gene3D" id="3.40.50.360">
    <property type="match status" value="1"/>
</dbReference>
<dbReference type="Gene3D" id="1.20.990.10">
    <property type="entry name" value="NADPH-cytochrome p450 Reductase, Chain A, domain 3"/>
    <property type="match status" value="1"/>
</dbReference>
<dbReference type="Gene3D" id="3.40.50.80">
    <property type="entry name" value="Nucleotide-binding domain of ferredoxin-NADP reductase (FNR) module"/>
    <property type="match status" value="1"/>
</dbReference>
<dbReference type="Gene3D" id="2.40.30.10">
    <property type="entry name" value="Translation factors"/>
    <property type="match status" value="1"/>
</dbReference>
<dbReference type="HAMAP" id="MF_01541">
    <property type="entry name" value="CysJ"/>
    <property type="match status" value="1"/>
</dbReference>
<dbReference type="InterPro" id="IPR010199">
    <property type="entry name" value="CysJ"/>
</dbReference>
<dbReference type="InterPro" id="IPR003097">
    <property type="entry name" value="CysJ-like_FAD-binding"/>
</dbReference>
<dbReference type="InterPro" id="IPR029758">
    <property type="entry name" value="CysJ_Proteobact"/>
</dbReference>
<dbReference type="InterPro" id="IPR017927">
    <property type="entry name" value="FAD-bd_FR_type"/>
</dbReference>
<dbReference type="InterPro" id="IPR001094">
    <property type="entry name" value="Flavdoxin-like"/>
</dbReference>
<dbReference type="InterPro" id="IPR008254">
    <property type="entry name" value="Flavodoxin/NO_synth"/>
</dbReference>
<dbReference type="InterPro" id="IPR001709">
    <property type="entry name" value="Flavoprot_Pyr_Nucl_cyt_Rdtase"/>
</dbReference>
<dbReference type="InterPro" id="IPR029039">
    <property type="entry name" value="Flavoprotein-like_sf"/>
</dbReference>
<dbReference type="InterPro" id="IPR039261">
    <property type="entry name" value="FNR_nucleotide-bd"/>
</dbReference>
<dbReference type="InterPro" id="IPR023173">
    <property type="entry name" value="NADPH_Cyt_P450_Rdtase_alpha"/>
</dbReference>
<dbReference type="InterPro" id="IPR001433">
    <property type="entry name" value="OxRdtase_FAD/NAD-bd"/>
</dbReference>
<dbReference type="InterPro" id="IPR017938">
    <property type="entry name" value="Riboflavin_synthase-like_b-brl"/>
</dbReference>
<dbReference type="NCBIfam" id="TIGR01931">
    <property type="entry name" value="cysJ"/>
    <property type="match status" value="1"/>
</dbReference>
<dbReference type="PANTHER" id="PTHR19384:SF128">
    <property type="entry name" value="NADPH OXIDOREDUCTASE A"/>
    <property type="match status" value="1"/>
</dbReference>
<dbReference type="PANTHER" id="PTHR19384">
    <property type="entry name" value="NITRIC OXIDE SYNTHASE-RELATED"/>
    <property type="match status" value="1"/>
</dbReference>
<dbReference type="Pfam" id="PF00667">
    <property type="entry name" value="FAD_binding_1"/>
    <property type="match status" value="1"/>
</dbReference>
<dbReference type="Pfam" id="PF00258">
    <property type="entry name" value="Flavodoxin_1"/>
    <property type="match status" value="1"/>
</dbReference>
<dbReference type="Pfam" id="PF00175">
    <property type="entry name" value="NAD_binding_1"/>
    <property type="match status" value="1"/>
</dbReference>
<dbReference type="PIRSF" id="PIRSF000207">
    <property type="entry name" value="SiR-FP_CysJ"/>
    <property type="match status" value="1"/>
</dbReference>
<dbReference type="PRINTS" id="PR00369">
    <property type="entry name" value="FLAVODOXIN"/>
</dbReference>
<dbReference type="PRINTS" id="PR00371">
    <property type="entry name" value="FPNCR"/>
</dbReference>
<dbReference type="SUPFAM" id="SSF52343">
    <property type="entry name" value="Ferredoxin reductase-like, C-terminal NADP-linked domain"/>
    <property type="match status" value="1"/>
</dbReference>
<dbReference type="SUPFAM" id="SSF52218">
    <property type="entry name" value="Flavoproteins"/>
    <property type="match status" value="1"/>
</dbReference>
<dbReference type="SUPFAM" id="SSF63380">
    <property type="entry name" value="Riboflavin synthase domain-like"/>
    <property type="match status" value="1"/>
</dbReference>
<dbReference type="PROSITE" id="PS51384">
    <property type="entry name" value="FAD_FR"/>
    <property type="match status" value="1"/>
</dbReference>
<dbReference type="PROSITE" id="PS50902">
    <property type="entry name" value="FLAVODOXIN_LIKE"/>
    <property type="match status" value="1"/>
</dbReference>
<gene>
    <name evidence="1" type="primary">cysJ</name>
    <name type="ordered locus">PBPRA3321</name>
</gene>
<organism>
    <name type="scientific">Photobacterium profundum (strain SS9)</name>
    <dbReference type="NCBI Taxonomy" id="298386"/>
    <lineage>
        <taxon>Bacteria</taxon>
        <taxon>Pseudomonadati</taxon>
        <taxon>Pseudomonadota</taxon>
        <taxon>Gammaproteobacteria</taxon>
        <taxon>Vibrionales</taxon>
        <taxon>Vibrionaceae</taxon>
        <taxon>Photobacterium</taxon>
    </lineage>
</organism>
<protein>
    <recommendedName>
        <fullName evidence="1">Sulfite reductase [NADPH] flavoprotein alpha-component</fullName>
        <shortName evidence="1">SiR-FP</shortName>
        <ecNumber evidence="1">1.8.1.2</ecNumber>
    </recommendedName>
</protein>
<evidence type="ECO:0000255" key="1">
    <source>
        <dbReference type="HAMAP-Rule" id="MF_01541"/>
    </source>
</evidence>
<sequence>MLLKELSAVASPLNDQQIDQLQQAAAESSPQQLAWISGYFWGLSQTQASTHLQSVSQPGVVAAAQPAGKLTIIYASQTGNAKGVAIALKEEATAAGIAVELVSAGDYKGKNFAKETHVILIASTHGEGEAPDDAIDLHEFLQSKKAPKLPNLQYAVIGLGDSSYEFFCQTAKDFDSYLSKLGAQPMLERLDCDVDYDAPAAEWRVKALAKAKETLSTGDADVVPLPITQSQQAVSQYSKQNPYEATLLTSQKITGRHSGKDVRHIEIDLEGSGLTYQAGDALGVWYENDPELALAIVAKVGLSGEELIDVDGEHIQLVTALVSQYEITSANPQLVTKFAALSESKKLEKLVADKNKLREYSGNTQIIDVLAEKKTQLSAEQLISLLRRLTPRLYSISSSQEEVGEEVHLTVGVVEFEKGEESRQGGASSFLSHRLEEGAAVKVFVEENNNFKLPADDNTPVIMIGPGTGIAPFRAFVQERDNREAEGKNWLFFGDRTFTDDFLYQVEWQKYLKSGVVQQLDVAFSRDQVEKVYVQHRVLEHAEQVWQWLQEGAHVYVCGDMNHMAKDVHDALLTVIEQQGKQSREQAEQYLNELRKSKRYQKDVY</sequence>
<accession>Q6LM58</accession>
<reference key="1">
    <citation type="journal article" date="2005" name="Science">
        <title>Life at depth: Photobacterium profundum genome sequence and expression analysis.</title>
        <authorList>
            <person name="Vezzi A."/>
            <person name="Campanaro S."/>
            <person name="D'Angelo M."/>
            <person name="Simonato F."/>
            <person name="Vitulo N."/>
            <person name="Lauro F.M."/>
            <person name="Cestaro A."/>
            <person name="Malacrida G."/>
            <person name="Simionati B."/>
            <person name="Cannata N."/>
            <person name="Romualdi C."/>
            <person name="Bartlett D.H."/>
            <person name="Valle G."/>
        </authorList>
    </citation>
    <scope>NUCLEOTIDE SEQUENCE [LARGE SCALE GENOMIC DNA]</scope>
    <source>
        <strain>ATCC BAA-1253 / SS9</strain>
    </source>
</reference>
<name>CYSJ_PHOPR</name>
<proteinExistence type="inferred from homology"/>
<feature type="chain" id="PRO_0000199931" description="Sulfite reductase [NADPH] flavoprotein alpha-component">
    <location>
        <begin position="1"/>
        <end position="605"/>
    </location>
</feature>
<feature type="domain" description="Flavodoxin-like" evidence="1">
    <location>
        <begin position="70"/>
        <end position="208"/>
    </location>
</feature>
<feature type="domain" description="FAD-binding FR-type" evidence="1">
    <location>
        <begin position="240"/>
        <end position="454"/>
    </location>
</feature>
<feature type="binding site" evidence="1">
    <location>
        <begin position="76"/>
        <end position="81"/>
    </location>
    <ligand>
        <name>FMN</name>
        <dbReference type="ChEBI" id="CHEBI:58210"/>
    </ligand>
</feature>
<feature type="binding site" evidence="1">
    <location>
        <begin position="123"/>
        <end position="126"/>
    </location>
    <ligand>
        <name>FMN</name>
        <dbReference type="ChEBI" id="CHEBI:58210"/>
    </ligand>
</feature>
<feature type="binding site" evidence="1">
    <location>
        <begin position="159"/>
        <end position="168"/>
    </location>
    <ligand>
        <name>FMN</name>
        <dbReference type="ChEBI" id="CHEBI:58210"/>
    </ligand>
</feature>
<feature type="binding site" evidence="1">
    <location>
        <position position="328"/>
    </location>
    <ligand>
        <name>FAD</name>
        <dbReference type="ChEBI" id="CHEBI:57692"/>
    </ligand>
</feature>
<feature type="binding site" evidence="1">
    <location>
        <position position="362"/>
    </location>
    <ligand>
        <name>FAD</name>
        <dbReference type="ChEBI" id="CHEBI:57692"/>
    </ligand>
</feature>
<feature type="binding site" evidence="1">
    <location>
        <begin position="392"/>
        <end position="395"/>
    </location>
    <ligand>
        <name>FAD</name>
        <dbReference type="ChEBI" id="CHEBI:57692"/>
    </ligand>
</feature>
<feature type="binding site" evidence="1">
    <location>
        <begin position="410"/>
        <end position="412"/>
    </location>
    <ligand>
        <name>FAD</name>
        <dbReference type="ChEBI" id="CHEBI:57692"/>
    </ligand>
</feature>
<feature type="binding site" evidence="1">
    <location>
        <begin position="425"/>
        <end position="428"/>
    </location>
    <ligand>
        <name>FAD</name>
        <dbReference type="ChEBI" id="CHEBI:57692"/>
    </ligand>
</feature>
<feature type="binding site" evidence="1">
    <location>
        <begin position="525"/>
        <end position="526"/>
    </location>
    <ligand>
        <name>NADP(+)</name>
        <dbReference type="ChEBI" id="CHEBI:58349"/>
    </ligand>
</feature>
<feature type="binding site" evidence="1">
    <location>
        <begin position="531"/>
        <end position="535"/>
    </location>
    <ligand>
        <name>NADP(+)</name>
        <dbReference type="ChEBI" id="CHEBI:58349"/>
    </ligand>
</feature>
<feature type="binding site" evidence="1">
    <location>
        <position position="567"/>
    </location>
    <ligand>
        <name>NADP(+)</name>
        <dbReference type="ChEBI" id="CHEBI:58349"/>
    </ligand>
</feature>
<feature type="binding site" evidence="1">
    <location>
        <position position="605"/>
    </location>
    <ligand>
        <name>FAD</name>
        <dbReference type="ChEBI" id="CHEBI:57692"/>
    </ligand>
</feature>